<name>RL16_SYNS9</name>
<reference key="1">
    <citation type="submission" date="2005-08" db="EMBL/GenBank/DDBJ databases">
        <title>Complete sequence of Synechococcus sp. CC9902.</title>
        <authorList>
            <person name="Copeland A."/>
            <person name="Lucas S."/>
            <person name="Lapidus A."/>
            <person name="Barry K."/>
            <person name="Detter J.C."/>
            <person name="Glavina T."/>
            <person name="Hammon N."/>
            <person name="Israni S."/>
            <person name="Pitluck S."/>
            <person name="Martinez M."/>
            <person name="Schmutz J."/>
            <person name="Larimer F."/>
            <person name="Land M."/>
            <person name="Kyrpides N."/>
            <person name="Ivanova N."/>
            <person name="Richardson P."/>
        </authorList>
    </citation>
    <scope>NUCLEOTIDE SEQUENCE [LARGE SCALE GENOMIC DNA]</scope>
    <source>
        <strain>CC9902</strain>
    </source>
</reference>
<proteinExistence type="inferred from homology"/>
<protein>
    <recommendedName>
        <fullName evidence="1">Large ribosomal subunit protein uL16</fullName>
    </recommendedName>
    <alternativeName>
        <fullName evidence="2">50S ribosomal protein L16</fullName>
    </alternativeName>
</protein>
<dbReference type="EMBL" id="CP000097">
    <property type="protein sequence ID" value="ABB26920.1"/>
    <property type="molecule type" value="Genomic_DNA"/>
</dbReference>
<dbReference type="RefSeq" id="WP_011360719.1">
    <property type="nucleotide sequence ID" value="NC_007513.1"/>
</dbReference>
<dbReference type="SMR" id="Q3AUW9"/>
<dbReference type="STRING" id="316279.Syncc9902_1962"/>
<dbReference type="KEGG" id="sye:Syncc9902_1962"/>
<dbReference type="eggNOG" id="COG0197">
    <property type="taxonomic scope" value="Bacteria"/>
</dbReference>
<dbReference type="HOGENOM" id="CLU_078858_2_1_3"/>
<dbReference type="OrthoDB" id="9802589at2"/>
<dbReference type="Proteomes" id="UP000002712">
    <property type="component" value="Chromosome"/>
</dbReference>
<dbReference type="GO" id="GO:1990904">
    <property type="term" value="C:ribonucleoprotein complex"/>
    <property type="evidence" value="ECO:0007669"/>
    <property type="project" value="UniProtKB-KW"/>
</dbReference>
<dbReference type="GO" id="GO:0005840">
    <property type="term" value="C:ribosome"/>
    <property type="evidence" value="ECO:0007669"/>
    <property type="project" value="UniProtKB-KW"/>
</dbReference>
<dbReference type="GO" id="GO:0019843">
    <property type="term" value="F:rRNA binding"/>
    <property type="evidence" value="ECO:0007669"/>
    <property type="project" value="UniProtKB-UniRule"/>
</dbReference>
<dbReference type="GO" id="GO:0003735">
    <property type="term" value="F:structural constituent of ribosome"/>
    <property type="evidence" value="ECO:0007669"/>
    <property type="project" value="InterPro"/>
</dbReference>
<dbReference type="GO" id="GO:0000049">
    <property type="term" value="F:tRNA binding"/>
    <property type="evidence" value="ECO:0007669"/>
    <property type="project" value="UniProtKB-KW"/>
</dbReference>
<dbReference type="GO" id="GO:0006412">
    <property type="term" value="P:translation"/>
    <property type="evidence" value="ECO:0007669"/>
    <property type="project" value="UniProtKB-UniRule"/>
</dbReference>
<dbReference type="CDD" id="cd01433">
    <property type="entry name" value="Ribosomal_L16_L10e"/>
    <property type="match status" value="1"/>
</dbReference>
<dbReference type="FunFam" id="3.90.1170.10:FF:000001">
    <property type="entry name" value="50S ribosomal protein L16"/>
    <property type="match status" value="1"/>
</dbReference>
<dbReference type="Gene3D" id="3.90.1170.10">
    <property type="entry name" value="Ribosomal protein L10e/L16"/>
    <property type="match status" value="1"/>
</dbReference>
<dbReference type="HAMAP" id="MF_01342">
    <property type="entry name" value="Ribosomal_uL16"/>
    <property type="match status" value="1"/>
</dbReference>
<dbReference type="InterPro" id="IPR047873">
    <property type="entry name" value="Ribosomal_uL16"/>
</dbReference>
<dbReference type="InterPro" id="IPR000114">
    <property type="entry name" value="Ribosomal_uL16_bact-type"/>
</dbReference>
<dbReference type="InterPro" id="IPR020798">
    <property type="entry name" value="Ribosomal_uL16_CS"/>
</dbReference>
<dbReference type="InterPro" id="IPR016180">
    <property type="entry name" value="Ribosomal_uL16_dom"/>
</dbReference>
<dbReference type="InterPro" id="IPR036920">
    <property type="entry name" value="Ribosomal_uL16_sf"/>
</dbReference>
<dbReference type="NCBIfam" id="TIGR01164">
    <property type="entry name" value="rplP_bact"/>
    <property type="match status" value="1"/>
</dbReference>
<dbReference type="PANTHER" id="PTHR12220">
    <property type="entry name" value="50S/60S RIBOSOMAL PROTEIN L16"/>
    <property type="match status" value="1"/>
</dbReference>
<dbReference type="PANTHER" id="PTHR12220:SF13">
    <property type="entry name" value="LARGE RIBOSOMAL SUBUNIT PROTEIN UL16M"/>
    <property type="match status" value="1"/>
</dbReference>
<dbReference type="Pfam" id="PF00252">
    <property type="entry name" value="Ribosomal_L16"/>
    <property type="match status" value="1"/>
</dbReference>
<dbReference type="PRINTS" id="PR00060">
    <property type="entry name" value="RIBOSOMALL16"/>
</dbReference>
<dbReference type="SUPFAM" id="SSF54686">
    <property type="entry name" value="Ribosomal protein L16p/L10e"/>
    <property type="match status" value="1"/>
</dbReference>
<dbReference type="PROSITE" id="PS00586">
    <property type="entry name" value="RIBOSOMAL_L16_1"/>
    <property type="match status" value="1"/>
</dbReference>
<dbReference type="PROSITE" id="PS00701">
    <property type="entry name" value="RIBOSOMAL_L16_2"/>
    <property type="match status" value="1"/>
</dbReference>
<organism>
    <name type="scientific">Synechococcus sp. (strain CC9902)</name>
    <dbReference type="NCBI Taxonomy" id="316279"/>
    <lineage>
        <taxon>Bacteria</taxon>
        <taxon>Bacillati</taxon>
        <taxon>Cyanobacteriota</taxon>
        <taxon>Cyanophyceae</taxon>
        <taxon>Synechococcales</taxon>
        <taxon>Synechococcaceae</taxon>
        <taxon>Synechococcus</taxon>
    </lineage>
</organism>
<accession>Q3AUW9</accession>
<evidence type="ECO:0000255" key="1">
    <source>
        <dbReference type="HAMAP-Rule" id="MF_01342"/>
    </source>
</evidence>
<evidence type="ECO:0000305" key="2"/>
<comment type="function">
    <text evidence="1">Binds 23S rRNA and is also seen to make contacts with the A and possibly P site tRNAs.</text>
</comment>
<comment type="subunit">
    <text evidence="1">Part of the 50S ribosomal subunit.</text>
</comment>
<comment type="similarity">
    <text evidence="1">Belongs to the universal ribosomal protein uL16 family.</text>
</comment>
<feature type="chain" id="PRO_0000251682" description="Large ribosomal subunit protein uL16">
    <location>
        <begin position="1"/>
        <end position="158"/>
    </location>
</feature>
<keyword id="KW-1185">Reference proteome</keyword>
<keyword id="KW-0687">Ribonucleoprotein</keyword>
<keyword id="KW-0689">Ribosomal protein</keyword>
<keyword id="KW-0694">RNA-binding</keyword>
<keyword id="KW-0699">rRNA-binding</keyword>
<keyword id="KW-0820">tRNA-binding</keyword>
<gene>
    <name evidence="1" type="primary">rplP</name>
    <name evidence="1" type="synonym">rpl16</name>
    <name type="ordered locus">Syncc9902_1962</name>
</gene>
<sequence length="158" mass="17645">MLSPKRVKFRKQQRGRMRGVATRGNTIAFGEFALQAQECGWITSRQIEASRRAMTRYVKRGGKIWIRIFPDKPVTMRAAETRMGSGKGNPEFWVAVIKPGRILFEMGGEEITPEIAKEAMRLAQYKLPVKTKFIALGDEEKTAGAKTPAASKAVTVES</sequence>